<comment type="function">
    <text evidence="1">Specifically methylates the N7 position of a guanine in 16S rRNA.</text>
</comment>
<comment type="subcellular location">
    <subcellularLocation>
        <location evidence="1">Cytoplasm</location>
    </subcellularLocation>
</comment>
<comment type="similarity">
    <text evidence="1">Belongs to the methyltransferase superfamily. RNA methyltransferase RsmG family.</text>
</comment>
<evidence type="ECO:0000255" key="1">
    <source>
        <dbReference type="HAMAP-Rule" id="MF_00074"/>
    </source>
</evidence>
<name>RSMG_STRP8</name>
<protein>
    <recommendedName>
        <fullName evidence="1">Ribosomal RNA small subunit methyltransferase G</fullName>
        <ecNumber evidence="1">2.1.1.-</ecNumber>
    </recommendedName>
    <alternativeName>
        <fullName evidence="1">16S rRNA 7-methylguanosine methyltransferase</fullName>
        <shortName evidence="1">16S rRNA m7G methyltransferase</shortName>
    </alternativeName>
</protein>
<reference key="1">
    <citation type="journal article" date="2002" name="Proc. Natl. Acad. Sci. U.S.A.">
        <title>Genome sequence and comparative microarray analysis of serotype M18 group A Streptococcus strains associated with acute rheumatic fever outbreaks.</title>
        <authorList>
            <person name="Smoot J.C."/>
            <person name="Barbian K.D."/>
            <person name="Van Gompel J.J."/>
            <person name="Smoot L.M."/>
            <person name="Chaussee M.S."/>
            <person name="Sylva G.L."/>
            <person name="Sturdevant D.E."/>
            <person name="Ricklefs S.M."/>
            <person name="Porcella S.F."/>
            <person name="Parkins L.D."/>
            <person name="Beres S.B."/>
            <person name="Campbell D.S."/>
            <person name="Smith T.M."/>
            <person name="Zhang Q."/>
            <person name="Kapur V."/>
            <person name="Daly J.A."/>
            <person name="Veasy L.G."/>
            <person name="Musser J.M."/>
        </authorList>
    </citation>
    <scope>NUCLEOTIDE SEQUENCE [LARGE SCALE GENOMIC DNA]</scope>
    <source>
        <strain>MGAS8232</strain>
    </source>
</reference>
<gene>
    <name evidence="1" type="primary">rsmG</name>
    <name type="ordered locus">spyM18_0323</name>
</gene>
<accession>Q8P2K1</accession>
<proteinExistence type="inferred from homology"/>
<dbReference type="EC" id="2.1.1.-" evidence="1"/>
<dbReference type="EMBL" id="AE009949">
    <property type="protein sequence ID" value="AAL97079.1"/>
    <property type="molecule type" value="Genomic_DNA"/>
</dbReference>
<dbReference type="RefSeq" id="WP_002985957.1">
    <property type="nucleotide sequence ID" value="NC_003485.1"/>
</dbReference>
<dbReference type="SMR" id="Q8P2K1"/>
<dbReference type="KEGG" id="spm:spyM18_0323"/>
<dbReference type="HOGENOM" id="CLU_065341_0_2_9"/>
<dbReference type="GO" id="GO:0005829">
    <property type="term" value="C:cytosol"/>
    <property type="evidence" value="ECO:0007669"/>
    <property type="project" value="TreeGrafter"/>
</dbReference>
<dbReference type="GO" id="GO:0070043">
    <property type="term" value="F:rRNA (guanine-N7-)-methyltransferase activity"/>
    <property type="evidence" value="ECO:0007669"/>
    <property type="project" value="UniProtKB-UniRule"/>
</dbReference>
<dbReference type="CDD" id="cd02440">
    <property type="entry name" value="AdoMet_MTases"/>
    <property type="match status" value="1"/>
</dbReference>
<dbReference type="FunFam" id="3.40.50.150:FF:000041">
    <property type="entry name" value="Ribosomal RNA small subunit methyltransferase G"/>
    <property type="match status" value="1"/>
</dbReference>
<dbReference type="Gene3D" id="3.40.50.150">
    <property type="entry name" value="Vaccinia Virus protein VP39"/>
    <property type="match status" value="1"/>
</dbReference>
<dbReference type="HAMAP" id="MF_00074">
    <property type="entry name" value="16SrRNA_methyltr_G"/>
    <property type="match status" value="1"/>
</dbReference>
<dbReference type="InterPro" id="IPR003682">
    <property type="entry name" value="rRNA_ssu_MeTfrase_G"/>
</dbReference>
<dbReference type="InterPro" id="IPR029063">
    <property type="entry name" value="SAM-dependent_MTases_sf"/>
</dbReference>
<dbReference type="NCBIfam" id="TIGR00138">
    <property type="entry name" value="rsmG_gidB"/>
    <property type="match status" value="1"/>
</dbReference>
<dbReference type="PANTHER" id="PTHR31760">
    <property type="entry name" value="S-ADENOSYL-L-METHIONINE-DEPENDENT METHYLTRANSFERASES SUPERFAMILY PROTEIN"/>
    <property type="match status" value="1"/>
</dbReference>
<dbReference type="PANTHER" id="PTHR31760:SF0">
    <property type="entry name" value="S-ADENOSYL-L-METHIONINE-DEPENDENT METHYLTRANSFERASES SUPERFAMILY PROTEIN"/>
    <property type="match status" value="1"/>
</dbReference>
<dbReference type="Pfam" id="PF02527">
    <property type="entry name" value="GidB"/>
    <property type="match status" value="1"/>
</dbReference>
<dbReference type="PIRSF" id="PIRSF003078">
    <property type="entry name" value="GidB"/>
    <property type="match status" value="1"/>
</dbReference>
<dbReference type="SUPFAM" id="SSF53335">
    <property type="entry name" value="S-adenosyl-L-methionine-dependent methyltransferases"/>
    <property type="match status" value="1"/>
</dbReference>
<sequence length="237" mass="26905">MTPQDFYRTLEEDGFSLSSKQKEQFDTYFKLLVEWNTKINLTAITEENEVYLKHFYDSIAPILQGFLANEPIKLLDIGAGAGFPSLPMKILFPNLEVTIIDSLNKRISFLTLLAQELGLENVHFFHGRAEDFGQDKAFRGQFDVVTARAVARMQVLSELTIPFLKIRGKLIALKAQAADQELEEAKNALCLLFGKVIKNHSYQLPNGDSRFITIVEKKKETPNKYPRKAGLPNKKPL</sequence>
<keyword id="KW-0963">Cytoplasm</keyword>
<keyword id="KW-0489">Methyltransferase</keyword>
<keyword id="KW-0698">rRNA processing</keyword>
<keyword id="KW-0949">S-adenosyl-L-methionine</keyword>
<keyword id="KW-0808">Transferase</keyword>
<feature type="chain" id="PRO_0000184343" description="Ribosomal RNA small subunit methyltransferase G">
    <location>
        <begin position="1"/>
        <end position="237"/>
    </location>
</feature>
<feature type="binding site" evidence="1">
    <location>
        <position position="78"/>
    </location>
    <ligand>
        <name>S-adenosyl-L-methionine</name>
        <dbReference type="ChEBI" id="CHEBI:59789"/>
    </ligand>
</feature>
<feature type="binding site" evidence="1">
    <location>
        <position position="83"/>
    </location>
    <ligand>
        <name>S-adenosyl-L-methionine</name>
        <dbReference type="ChEBI" id="CHEBI:59789"/>
    </ligand>
</feature>
<feature type="binding site" evidence="1">
    <location>
        <begin position="129"/>
        <end position="130"/>
    </location>
    <ligand>
        <name>S-adenosyl-L-methionine</name>
        <dbReference type="ChEBI" id="CHEBI:59789"/>
    </ligand>
</feature>
<feature type="binding site" evidence="1">
    <location>
        <position position="148"/>
    </location>
    <ligand>
        <name>S-adenosyl-L-methionine</name>
        <dbReference type="ChEBI" id="CHEBI:59789"/>
    </ligand>
</feature>
<organism>
    <name type="scientific">Streptococcus pyogenes serotype M18 (strain MGAS8232)</name>
    <dbReference type="NCBI Taxonomy" id="186103"/>
    <lineage>
        <taxon>Bacteria</taxon>
        <taxon>Bacillati</taxon>
        <taxon>Bacillota</taxon>
        <taxon>Bacilli</taxon>
        <taxon>Lactobacillales</taxon>
        <taxon>Streptococcaceae</taxon>
        <taxon>Streptococcus</taxon>
    </lineage>
</organism>